<accession>Q8G0L6</accession>
<accession>G0K9Z5</accession>
<evidence type="ECO:0000255" key="1">
    <source>
        <dbReference type="HAMAP-Rule" id="MF_00386"/>
    </source>
</evidence>
<evidence type="ECO:0000256" key="2">
    <source>
        <dbReference type="SAM" id="MobiDB-lite"/>
    </source>
</evidence>
<organism>
    <name type="scientific">Brucella suis biovar 1 (strain 1330)</name>
    <dbReference type="NCBI Taxonomy" id="204722"/>
    <lineage>
        <taxon>Bacteria</taxon>
        <taxon>Pseudomonadati</taxon>
        <taxon>Pseudomonadota</taxon>
        <taxon>Alphaproteobacteria</taxon>
        <taxon>Hyphomicrobiales</taxon>
        <taxon>Brucellaceae</taxon>
        <taxon>Brucella/Ochrobactrum group</taxon>
        <taxon>Brucella</taxon>
    </lineage>
</organism>
<comment type="function">
    <text evidence="1">Could be involved in insertion of integral membrane proteins into the membrane.</text>
</comment>
<comment type="subcellular location">
    <subcellularLocation>
        <location evidence="1">Cell inner membrane</location>
        <topology evidence="1">Peripheral membrane protein</topology>
        <orientation evidence="1">Cytoplasmic side</orientation>
    </subcellularLocation>
</comment>
<comment type="similarity">
    <text evidence="1">Belongs to the UPF0161 family.</text>
</comment>
<reference key="1">
    <citation type="journal article" date="2002" name="Proc. Natl. Acad. Sci. U.S.A.">
        <title>The Brucella suis genome reveals fundamental similarities between animal and plant pathogens and symbionts.</title>
        <authorList>
            <person name="Paulsen I.T."/>
            <person name="Seshadri R."/>
            <person name="Nelson K.E."/>
            <person name="Eisen J.A."/>
            <person name="Heidelberg J.F."/>
            <person name="Read T.D."/>
            <person name="Dodson R.J."/>
            <person name="Umayam L.A."/>
            <person name="Brinkac L.M."/>
            <person name="Beanan M.J."/>
            <person name="Daugherty S.C."/>
            <person name="DeBoy R.T."/>
            <person name="Durkin A.S."/>
            <person name="Kolonay J.F."/>
            <person name="Madupu R."/>
            <person name="Nelson W.C."/>
            <person name="Ayodeji B."/>
            <person name="Kraul M."/>
            <person name="Shetty J."/>
            <person name="Malek J.A."/>
            <person name="Van Aken S.E."/>
            <person name="Riedmuller S."/>
            <person name="Tettelin H."/>
            <person name="Gill S.R."/>
            <person name="White O."/>
            <person name="Salzberg S.L."/>
            <person name="Hoover D.L."/>
            <person name="Lindler L.E."/>
            <person name="Halling S.M."/>
            <person name="Boyle S.M."/>
            <person name="Fraser C.M."/>
        </authorList>
    </citation>
    <scope>NUCLEOTIDE SEQUENCE [LARGE SCALE GENOMIC DNA]</scope>
    <source>
        <strain>1330</strain>
    </source>
</reference>
<reference key="2">
    <citation type="journal article" date="2011" name="J. Bacteriol.">
        <title>Revised genome sequence of Brucella suis 1330.</title>
        <authorList>
            <person name="Tae H."/>
            <person name="Shallom S."/>
            <person name="Settlage R."/>
            <person name="Preston D."/>
            <person name="Adams L.G."/>
            <person name="Garner H.R."/>
        </authorList>
    </citation>
    <scope>NUCLEOTIDE SEQUENCE [LARGE SCALE GENOMIC DNA]</scope>
    <source>
        <strain>1330</strain>
    </source>
</reference>
<sequence length="123" mass="14049">MGSCGGKHTGKGAPKPYSRNFTDPWRKTPGRLFGTALIRFYQITLSSLIGNSCRHLPTCSEYAYEAIARHGLWRGGWMGFFRVVRCGPFGTHGFDPVPRELSPDLKWYMPWRYWRCSASRTGK</sequence>
<protein>
    <recommendedName>
        <fullName evidence="1">Putative membrane protein insertion efficiency factor</fullName>
    </recommendedName>
</protein>
<dbReference type="EMBL" id="AE014291">
    <property type="protein sequence ID" value="AAN29993.1"/>
    <property type="molecule type" value="Genomic_DNA"/>
</dbReference>
<dbReference type="EMBL" id="CP002997">
    <property type="protein sequence ID" value="AEM18411.1"/>
    <property type="molecule type" value="Genomic_DNA"/>
</dbReference>
<dbReference type="KEGG" id="bms:BR1073"/>
<dbReference type="KEGG" id="bsi:BS1330_I1069"/>
<dbReference type="PATRIC" id="fig|204722.21.peg.3684"/>
<dbReference type="HOGENOM" id="CLU_144811_0_1_5"/>
<dbReference type="PhylomeDB" id="Q8G0L6"/>
<dbReference type="Proteomes" id="UP000007104">
    <property type="component" value="Chromosome I"/>
</dbReference>
<dbReference type="GO" id="GO:0005886">
    <property type="term" value="C:plasma membrane"/>
    <property type="evidence" value="ECO:0007669"/>
    <property type="project" value="UniProtKB-SubCell"/>
</dbReference>
<dbReference type="HAMAP" id="MF_00386">
    <property type="entry name" value="UPF0161_YidD"/>
    <property type="match status" value="1"/>
</dbReference>
<dbReference type="InterPro" id="IPR002696">
    <property type="entry name" value="Membr_insert_effic_factor_YidD"/>
</dbReference>
<dbReference type="NCBIfam" id="TIGR00278">
    <property type="entry name" value="membrane protein insertion efficiency factor YidD"/>
    <property type="match status" value="1"/>
</dbReference>
<dbReference type="PANTHER" id="PTHR33383">
    <property type="entry name" value="MEMBRANE PROTEIN INSERTION EFFICIENCY FACTOR-RELATED"/>
    <property type="match status" value="1"/>
</dbReference>
<dbReference type="PANTHER" id="PTHR33383:SF1">
    <property type="entry name" value="MEMBRANE PROTEIN INSERTION EFFICIENCY FACTOR-RELATED"/>
    <property type="match status" value="1"/>
</dbReference>
<dbReference type="Pfam" id="PF01809">
    <property type="entry name" value="YidD"/>
    <property type="match status" value="1"/>
</dbReference>
<dbReference type="SMART" id="SM01234">
    <property type="entry name" value="Haemolytic"/>
    <property type="match status" value="1"/>
</dbReference>
<gene>
    <name type="ordered locus">BR1073</name>
    <name type="ordered locus">BS1330_I1069</name>
</gene>
<proteinExistence type="inferred from homology"/>
<name>YIDD_BRUSU</name>
<keyword id="KW-0997">Cell inner membrane</keyword>
<keyword id="KW-1003">Cell membrane</keyword>
<keyword id="KW-0472">Membrane</keyword>
<feature type="chain" id="PRO_0000171802" description="Putative membrane protein insertion efficiency factor">
    <location>
        <begin position="1"/>
        <end position="123"/>
    </location>
</feature>
<feature type="region of interest" description="Disordered" evidence="2">
    <location>
        <begin position="1"/>
        <end position="23"/>
    </location>
</feature>